<accession>P0A295</accession>
<accession>P26980</accession>
<accession>Q93V24</accession>
<proteinExistence type="inferred from homology"/>
<dbReference type="EC" id="3.6.4.-" evidence="1"/>
<dbReference type="EMBL" id="Z21789">
    <property type="protein sequence ID" value="CAA79852.1"/>
    <property type="molecule type" value="Genomic_DNA"/>
</dbReference>
<dbReference type="EMBL" id="AF233324">
    <property type="protein sequence ID" value="AAF33470.1"/>
    <property type="molecule type" value="Genomic_DNA"/>
</dbReference>
<dbReference type="EMBL" id="AE006468">
    <property type="protein sequence ID" value="AAL22766.1"/>
    <property type="molecule type" value="Genomic_DNA"/>
</dbReference>
<dbReference type="EMBL" id="D10015">
    <property type="protein sequence ID" value="BAA00904.1"/>
    <property type="molecule type" value="Genomic_DNA"/>
</dbReference>
<dbReference type="PIR" id="B49917">
    <property type="entry name" value="B49917"/>
</dbReference>
<dbReference type="RefSeq" id="NP_462807.1">
    <property type="nucleotide sequence ID" value="NC_003197.2"/>
</dbReference>
<dbReference type="RefSeq" id="WP_001054532.1">
    <property type="nucleotide sequence ID" value="NC_003197.2"/>
</dbReference>
<dbReference type="SMR" id="P0A295"/>
<dbReference type="STRING" id="99287.STM3917"/>
<dbReference type="PaxDb" id="99287-STM3917"/>
<dbReference type="GeneID" id="1255443"/>
<dbReference type="GeneID" id="66758203"/>
<dbReference type="KEGG" id="stm:STM3917"/>
<dbReference type="PATRIC" id="fig|99287.12.peg.4138"/>
<dbReference type="HOGENOM" id="CLU_016377_4_3_6"/>
<dbReference type="OMA" id="LCRAHNN"/>
<dbReference type="PhylomeDB" id="P0A295"/>
<dbReference type="BioCyc" id="SENT99287:STM3917-MONOMER"/>
<dbReference type="Proteomes" id="UP000001014">
    <property type="component" value="Chromosome"/>
</dbReference>
<dbReference type="GO" id="GO:0005829">
    <property type="term" value="C:cytosol"/>
    <property type="evidence" value="ECO:0007669"/>
    <property type="project" value="UniProtKB-ARBA"/>
</dbReference>
<dbReference type="GO" id="GO:0005524">
    <property type="term" value="F:ATP binding"/>
    <property type="evidence" value="ECO:0007669"/>
    <property type="project" value="UniProtKB-UniRule"/>
</dbReference>
<dbReference type="GO" id="GO:0016887">
    <property type="term" value="F:ATP hydrolysis activity"/>
    <property type="evidence" value="ECO:0007669"/>
    <property type="project" value="InterPro"/>
</dbReference>
<dbReference type="GO" id="GO:0008186">
    <property type="term" value="F:ATP-dependent activity, acting on RNA"/>
    <property type="evidence" value="ECO:0007669"/>
    <property type="project" value="InterPro"/>
</dbReference>
<dbReference type="GO" id="GO:0004386">
    <property type="term" value="F:helicase activity"/>
    <property type="evidence" value="ECO:0007669"/>
    <property type="project" value="UniProtKB-UniRule"/>
</dbReference>
<dbReference type="GO" id="GO:0003723">
    <property type="term" value="F:RNA binding"/>
    <property type="evidence" value="ECO:0007669"/>
    <property type="project" value="UniProtKB-UniRule"/>
</dbReference>
<dbReference type="GO" id="GO:0006353">
    <property type="term" value="P:DNA-templated transcription termination"/>
    <property type="evidence" value="ECO:0000318"/>
    <property type="project" value="GO_Central"/>
</dbReference>
<dbReference type="CDD" id="cd04459">
    <property type="entry name" value="Rho_CSD"/>
    <property type="match status" value="1"/>
</dbReference>
<dbReference type="CDD" id="cd01128">
    <property type="entry name" value="rho_factor_C"/>
    <property type="match status" value="1"/>
</dbReference>
<dbReference type="FunFam" id="1.10.720.10:FF:000001">
    <property type="entry name" value="Transcription termination factor Rho"/>
    <property type="match status" value="1"/>
</dbReference>
<dbReference type="FunFam" id="2.40.50.140:FF:000010">
    <property type="entry name" value="Transcription termination factor Rho"/>
    <property type="match status" value="1"/>
</dbReference>
<dbReference type="FunFam" id="3.40.50.300:FF:000072">
    <property type="entry name" value="Transcription termination factor Rho"/>
    <property type="match status" value="1"/>
</dbReference>
<dbReference type="Gene3D" id="1.10.720.10">
    <property type="match status" value="1"/>
</dbReference>
<dbReference type="Gene3D" id="2.40.50.140">
    <property type="entry name" value="Nucleic acid-binding proteins"/>
    <property type="match status" value="1"/>
</dbReference>
<dbReference type="Gene3D" id="3.40.50.300">
    <property type="entry name" value="P-loop containing nucleotide triphosphate hydrolases"/>
    <property type="match status" value="1"/>
</dbReference>
<dbReference type="HAMAP" id="MF_01884">
    <property type="entry name" value="Rho"/>
    <property type="match status" value="1"/>
</dbReference>
<dbReference type="InterPro" id="IPR003593">
    <property type="entry name" value="AAA+_ATPase"/>
</dbReference>
<dbReference type="InterPro" id="IPR000194">
    <property type="entry name" value="ATPase_F1/V1/A1_a/bsu_nucl-bd"/>
</dbReference>
<dbReference type="InterPro" id="IPR011129">
    <property type="entry name" value="CSD"/>
</dbReference>
<dbReference type="InterPro" id="IPR012340">
    <property type="entry name" value="NA-bd_OB-fold"/>
</dbReference>
<dbReference type="InterPro" id="IPR027417">
    <property type="entry name" value="P-loop_NTPase"/>
</dbReference>
<dbReference type="InterPro" id="IPR011112">
    <property type="entry name" value="Rho-like_N"/>
</dbReference>
<dbReference type="InterPro" id="IPR041703">
    <property type="entry name" value="Rho_factor_ATP-bd"/>
</dbReference>
<dbReference type="InterPro" id="IPR036269">
    <property type="entry name" value="Rho_N_sf"/>
</dbReference>
<dbReference type="InterPro" id="IPR011113">
    <property type="entry name" value="Rho_RNA-bd"/>
</dbReference>
<dbReference type="InterPro" id="IPR004665">
    <property type="entry name" value="Term_rho"/>
</dbReference>
<dbReference type="NCBIfam" id="NF006886">
    <property type="entry name" value="PRK09376.1"/>
    <property type="match status" value="1"/>
</dbReference>
<dbReference type="NCBIfam" id="TIGR00767">
    <property type="entry name" value="rho"/>
    <property type="match status" value="1"/>
</dbReference>
<dbReference type="PANTHER" id="PTHR46425">
    <property type="entry name" value="TRANSCRIPTION TERMINATION FACTOR RHO"/>
    <property type="match status" value="1"/>
</dbReference>
<dbReference type="PANTHER" id="PTHR46425:SF1">
    <property type="entry name" value="TRANSCRIPTION TERMINATION FACTOR RHO"/>
    <property type="match status" value="1"/>
</dbReference>
<dbReference type="Pfam" id="PF00006">
    <property type="entry name" value="ATP-synt_ab"/>
    <property type="match status" value="1"/>
</dbReference>
<dbReference type="Pfam" id="PF07498">
    <property type="entry name" value="Rho_N"/>
    <property type="match status" value="1"/>
</dbReference>
<dbReference type="Pfam" id="PF07497">
    <property type="entry name" value="Rho_RNA_bind"/>
    <property type="match status" value="1"/>
</dbReference>
<dbReference type="SMART" id="SM00382">
    <property type="entry name" value="AAA"/>
    <property type="match status" value="1"/>
</dbReference>
<dbReference type="SMART" id="SM00357">
    <property type="entry name" value="CSP"/>
    <property type="match status" value="1"/>
</dbReference>
<dbReference type="SMART" id="SM00959">
    <property type="entry name" value="Rho_N"/>
    <property type="match status" value="1"/>
</dbReference>
<dbReference type="SUPFAM" id="SSF50249">
    <property type="entry name" value="Nucleic acid-binding proteins"/>
    <property type="match status" value="1"/>
</dbReference>
<dbReference type="SUPFAM" id="SSF52540">
    <property type="entry name" value="P-loop containing nucleoside triphosphate hydrolases"/>
    <property type="match status" value="1"/>
</dbReference>
<dbReference type="SUPFAM" id="SSF68912">
    <property type="entry name" value="Rho N-terminal domain-like"/>
    <property type="match status" value="1"/>
</dbReference>
<dbReference type="PROSITE" id="PS51856">
    <property type="entry name" value="RHO_RNA_BD"/>
    <property type="match status" value="1"/>
</dbReference>
<name>RHO_SALTY</name>
<organism>
    <name type="scientific">Salmonella typhimurium (strain LT2 / SGSC1412 / ATCC 700720)</name>
    <dbReference type="NCBI Taxonomy" id="99287"/>
    <lineage>
        <taxon>Bacteria</taxon>
        <taxon>Pseudomonadati</taxon>
        <taxon>Pseudomonadota</taxon>
        <taxon>Gammaproteobacteria</taxon>
        <taxon>Enterobacterales</taxon>
        <taxon>Enterobacteriaceae</taxon>
        <taxon>Salmonella</taxon>
    </lineage>
</organism>
<evidence type="ECO:0000255" key="1">
    <source>
        <dbReference type="HAMAP-Rule" id="MF_01884"/>
    </source>
</evidence>
<evidence type="ECO:0000255" key="2">
    <source>
        <dbReference type="PROSITE-ProRule" id="PRU01203"/>
    </source>
</evidence>
<evidence type="ECO:0000305" key="3"/>
<comment type="function">
    <text>Facilitates transcription termination by a mechanism that involves Rho binding to the nascent RNA, activation of Rho's RNA-dependent ATPase activity, and release of the mRNA from the DNA template.</text>
</comment>
<comment type="subunit">
    <text evidence="1">Homohexamer. The homohexamer assembles into an open ring structure.</text>
</comment>
<comment type="similarity">
    <text evidence="1">Belongs to the Rho family.</text>
</comment>
<keyword id="KW-0067">ATP-binding</keyword>
<keyword id="KW-0347">Helicase</keyword>
<keyword id="KW-0378">Hydrolase</keyword>
<keyword id="KW-0547">Nucleotide-binding</keyword>
<keyword id="KW-1185">Reference proteome</keyword>
<keyword id="KW-0694">RNA-binding</keyword>
<keyword id="KW-0804">Transcription</keyword>
<keyword id="KW-0805">Transcription regulation</keyword>
<keyword id="KW-0806">Transcription termination</keyword>
<gene>
    <name evidence="1" type="primary">rho</name>
    <name type="ordered locus">STM3917</name>
    <name type="ORF">STMD1.73</name>
</gene>
<protein>
    <recommendedName>
        <fullName evidence="1">Transcription termination factor Rho</fullName>
        <ecNumber evidence="1">3.6.4.-</ecNumber>
    </recommendedName>
    <alternativeName>
        <fullName evidence="1">ATP-dependent helicase Rho</fullName>
    </alternativeName>
</protein>
<feature type="chain" id="PRO_0000188977" description="Transcription termination factor Rho">
    <location>
        <begin position="1"/>
        <end position="419"/>
    </location>
</feature>
<feature type="domain" description="Rho RNA-BD" evidence="2">
    <location>
        <begin position="48"/>
        <end position="123"/>
    </location>
</feature>
<feature type="region of interest" description="RNA-binding 1" evidence="1">
    <location>
        <begin position="61"/>
        <end position="66"/>
    </location>
</feature>
<feature type="region of interest" description="RNA-binding 1" evidence="1">
    <location>
        <begin position="78"/>
        <end position="80"/>
    </location>
</feature>
<feature type="region of interest" description="RNA-binding 1" evidence="1">
    <location>
        <begin position="108"/>
        <end position="110"/>
    </location>
</feature>
<feature type="region of interest" description="RNA-binding 2" evidence="1">
    <location>
        <begin position="284"/>
        <end position="288"/>
    </location>
</feature>
<feature type="binding site" evidence="1">
    <location>
        <begin position="169"/>
        <end position="174"/>
    </location>
    <ligand>
        <name>ATP</name>
        <dbReference type="ChEBI" id="CHEBI:30616"/>
    </ligand>
</feature>
<feature type="binding site" evidence="1">
    <location>
        <begin position="181"/>
        <end position="186"/>
    </location>
    <ligand>
        <name>ATP</name>
        <dbReference type="ChEBI" id="CHEBI:30616"/>
    </ligand>
</feature>
<feature type="binding site" evidence="1">
    <location>
        <position position="212"/>
    </location>
    <ligand>
        <name>ATP</name>
        <dbReference type="ChEBI" id="CHEBI:30616"/>
    </ligand>
</feature>
<feature type="site" description="RNA-binding 2" evidence="1">
    <location>
        <position position="326"/>
    </location>
</feature>
<feature type="sequence conflict" description="In Ref. 1; CAA79852." evidence="3" ref="1">
    <original>L</original>
    <variation>V</variation>
    <location>
        <position position="55"/>
    </location>
</feature>
<sequence length="419" mass="46993">MNLTELKNTPVSELITLGESMGLENLARMRKQDIIFAILKQHAKSGEDIFGDGVLEILQDGFGFLRSADSSYLAGPDDIYVSPSQIRRFNLRTGDTISGKIRPPKEGERYFALLKVNEVNYDKPENARNKILFENLTPLHANSRLRMERGNGSTEDLTARVLDLASPIGRGQRGLIVAPPKAGKTMLLQNIAQSIAYNHPDCVLMVLLIDERPEEVTEMQRLVKGEVVASTFDEPASRHVQVAEMVIEKAKRLVEHKKDVIILLDSITRLARAYNTVVPASGKVLTGGVDANALHRPKRFFGAARNVEEGGSLTIIATALIDTGSKMDEVIYEEFKGTGNMELHLSRKIAEKRVFPAIDYNRSGTRKEELLTTQEELQKMWILRKIIHPMGEIDAMEFLINKLAMTKTNDDFFEMMKRS</sequence>
<reference key="1">
    <citation type="journal article" date="1993" name="J. Bacteriol.">
        <title>Characterization of the rho genes of Neisseria gonorrhoeae and Salmonella typhimurium.</title>
        <authorList>
            <person name="Miloso M."/>
            <person name="Limauro D."/>
            <person name="Alifano P."/>
            <person name="Rivellini F."/>
            <person name="Lavitola A."/>
            <person name="Gulletta E."/>
            <person name="Bruni C.B."/>
        </authorList>
    </citation>
    <scope>NUCLEOTIDE SEQUENCE [GENOMIC DNA]</scope>
    <source>
        <strain>LT2</strain>
    </source>
</reference>
<reference key="2">
    <citation type="journal article" date="2001" name="Nature">
        <title>Complete genome sequence of Salmonella enterica serovar Typhimurium LT2.</title>
        <authorList>
            <person name="McClelland M."/>
            <person name="Sanderson K.E."/>
            <person name="Spieth J."/>
            <person name="Clifton S.W."/>
            <person name="Latreille P."/>
            <person name="Courtney L."/>
            <person name="Porwollik S."/>
            <person name="Ali J."/>
            <person name="Dante M."/>
            <person name="Du F."/>
            <person name="Hou S."/>
            <person name="Layman D."/>
            <person name="Leonard S."/>
            <person name="Nguyen C."/>
            <person name="Scott K."/>
            <person name="Holmes A."/>
            <person name="Grewal N."/>
            <person name="Mulvaney E."/>
            <person name="Ryan E."/>
            <person name="Sun H."/>
            <person name="Florea L."/>
            <person name="Miller W."/>
            <person name="Stoneking T."/>
            <person name="Nhan M."/>
            <person name="Waterston R."/>
            <person name="Wilson R.K."/>
        </authorList>
    </citation>
    <scope>NUCLEOTIDE SEQUENCE [LARGE SCALE GENOMIC DNA]</scope>
    <source>
        <strain>LT2 / SGSC1412 / ATCC 700720</strain>
    </source>
</reference>
<reference key="3">
    <citation type="journal article" date="1992" name="Nucleic Acids Res.">
        <title>Cloning and sequence of thioredoxin gene of Salmonella typhimurium LT2.</title>
        <authorList>
            <person name="Kotani H."/>
            <person name="Nakajima K."/>
        </authorList>
    </citation>
    <scope>NUCLEOTIDE SEQUENCE [GENOMIC DNA] OF 1-163</scope>
    <source>
        <strain>LT2</strain>
    </source>
</reference>